<evidence type="ECO:0000250" key="1">
    <source>
        <dbReference type="UniProtKB" id="P0DQT5"/>
    </source>
</evidence>
<evidence type="ECO:0000255" key="2"/>
<evidence type="ECO:0000303" key="3">
    <source>
    </source>
</evidence>
<evidence type="ECO:0000305" key="4"/>
<evidence type="ECO:0000305" key="5">
    <source>
    </source>
</evidence>
<dbReference type="GO" id="GO:0005576">
    <property type="term" value="C:extracellular region"/>
    <property type="evidence" value="ECO:0007669"/>
    <property type="project" value="UniProtKB-SubCell"/>
</dbReference>
<dbReference type="GO" id="GO:0090729">
    <property type="term" value="F:toxin activity"/>
    <property type="evidence" value="ECO:0007669"/>
    <property type="project" value="UniProtKB-KW"/>
</dbReference>
<sequence length="83" mass="9666">MQTAYWVMVMMMVWITAPLSEGGKLNNVIRGLVPDDVTPKRISQSLISRRRFDSRIMFVPSCIWKTCPSYLHGDNYDLKEKDK</sequence>
<keyword id="KW-0208">D-amino acid</keyword>
<keyword id="KW-1015">Disulfide bond</keyword>
<keyword id="KW-1213">G-protein coupled receptor impairing toxin</keyword>
<keyword id="KW-0379">Hydroxylation</keyword>
<keyword id="KW-0964">Secreted</keyword>
<keyword id="KW-0732">Signal</keyword>
<keyword id="KW-0800">Toxin</keyword>
<reference key="1">
    <citation type="journal article" date="2022" name="Sci. Adv.">
        <title>Somatostatin venom analogs evolved by fish-hunting cone snails: from prey capture behavior to identifying drug leads.</title>
        <authorList>
            <person name="Ramiro I.B.L."/>
            <person name="Bjoern-Yoshimoto W.E."/>
            <person name="Imperial J.S."/>
            <person name="Gajewiak J."/>
            <person name="Salcedo P.F."/>
            <person name="Watkins M."/>
            <person name="Taylor D."/>
            <person name="Resager W."/>
            <person name="Ueberheide B."/>
            <person name="Braeuner-Osborne H."/>
            <person name="Whitby F.G."/>
            <person name="Hill C.P."/>
            <person name="Martin L.F."/>
            <person name="Patwardhan A."/>
            <person name="Concepcion G.P."/>
            <person name="Olivera B.M."/>
            <person name="Safavi-Hemami H."/>
        </authorList>
    </citation>
    <scope>NUCLEOTIDE SEQUENCE [MRNA]</scope>
    <scope>PROBABLE D-AMINO ACID AT TRP-64</scope>
    <scope>PROBABLE HYDROXYLATION AT PRO-68</scope>
    <scope>PROBABLE DISULFIDE BOND</scope>
    <source>
        <tissue>Venom duct</tissue>
    </source>
</reference>
<proteinExistence type="evidence at protein level"/>
<accession>P0DW24</accession>
<feature type="signal peptide" evidence="2">
    <location>
        <begin position="1"/>
        <end position="22"/>
    </location>
</feature>
<feature type="propeptide" id="PRO_0000456131" evidence="5">
    <location>
        <begin position="23"/>
        <end position="55"/>
    </location>
</feature>
<feature type="peptide" id="PRO_0000456132" description="Consomatin Rs1" evidence="5">
    <location>
        <begin position="56"/>
        <end position="70"/>
    </location>
</feature>
<feature type="propeptide" id="PRO_0000456133" evidence="5">
    <location>
        <begin position="71"/>
        <end position="83"/>
    </location>
</feature>
<feature type="modified residue" description="D-tryptophan" evidence="1 5">
    <location>
        <position position="64"/>
    </location>
</feature>
<feature type="modified residue" description="4-hydroxyproline" evidence="5">
    <location>
        <position position="68"/>
    </location>
</feature>
<feature type="disulfide bond" evidence="1 5">
    <location>
        <begin position="62"/>
        <end position="67"/>
    </location>
</feature>
<protein>
    <recommendedName>
        <fullName evidence="3">Consomatin Rs1</fullName>
        <shortName evidence="3">ConSST Rs1</shortName>
    </recommendedName>
    <alternativeName>
        <fullName evidence="1">Somatostatin-related peptide</fullName>
        <shortName evidence="1">SSRP</shortName>
    </alternativeName>
</protein>
<comment type="function">
    <text evidence="1">Moderately activates human somatostatin receptors (SSTR) with a preferential activation of SSTR1 and SSTR4. In vivo, does not cause behavioral changes in mice within a few minutes of intracranial injection, but causes a progressive loss of movement thereafter. Four to five hours after injection, mice recover, even with the highest dose tested. Shows antinociception and antihyperalgesia activities in two mouse models of acute pain, most probably by acting outside the central nervous system.</text>
</comment>
<comment type="subcellular location">
    <subcellularLocation>
        <location evidence="5">Secreted</location>
    </subcellularLocation>
</comment>
<comment type="tissue specificity">
    <text evidence="5">Expressed by the venom duct.</text>
</comment>
<comment type="domain">
    <text evidence="4">The cysteine framework is C-C.</text>
</comment>
<comment type="miscellaneous">
    <text evidence="1">This peptide is an evolutionarily optimized stable analog of somatostatin. In addition, it adopts nearly identical conformations as in the somatostatin drug analog Octreotide. As this drug, it contains a D-Trp at the same position, whose synthesis is a common strategy used for enhancing the metabolic stability of compounds in drug design.</text>
</comment>
<comment type="miscellaneous">
    <text evidence="1">Consomatins evolved by gene duplication of a 'Somatostatin and related peptides (SSRP)' gene expressed in the snail neuroendocrine system.</text>
</comment>
<comment type="miscellaneous">
    <text evidence="1">Negative results: does not activate any of the other 313 GPCRs tested. Shows little or no activating activity at the SSTR2, SSTR3 and SSTR5.</text>
</comment>
<comment type="similarity">
    <text evidence="4">Belongs to the conotoxin C superfamily. Consomatin family.</text>
</comment>
<organism>
    <name type="scientific">Conus raulsilvai</name>
    <name type="common">Sea snail</name>
    <name type="synonym">Africonus raulsilvai</name>
    <dbReference type="NCBI Taxonomy" id="289047"/>
    <lineage>
        <taxon>Eukaryota</taxon>
        <taxon>Metazoa</taxon>
        <taxon>Spiralia</taxon>
        <taxon>Lophotrochozoa</taxon>
        <taxon>Mollusca</taxon>
        <taxon>Gastropoda</taxon>
        <taxon>Caenogastropoda</taxon>
        <taxon>Neogastropoda</taxon>
        <taxon>Conoidea</taxon>
        <taxon>Conidae</taxon>
        <taxon>Conus</taxon>
        <taxon>Lautoconus</taxon>
    </lineage>
</organism>
<name>CSST1_CONRL</name>